<sequence length="217" mass="24831">MSSKVSRDTLYEAVREVLHGNQRKRRKFLETVELQISLKNYDPQKDKRFSGTVRLKSTPRPKFSVCVLGDQQHCDEAKAVDIPHMDIEALKKLNKNKKLVKKLAKKYDAFLASESLIKQIPRILGPGLNKAGKFPSLLTHNENMVAKVDEVKSTIKFQMKKVLCLAVAVGHVKMTDDELVYNIHLAVNFLVSLLKKNWQNVRALYIKSTMGKPQRLY</sequence>
<name>RL10A_RAT</name>
<protein>
    <recommendedName>
        <fullName evidence="3">Large ribosomal subunit protein uL1</fullName>
    </recommendedName>
    <alternativeName>
        <fullName>60S ribosomal protein L10a</fullName>
    </alternativeName>
</protein>
<gene>
    <name type="primary">Rpl10a</name>
</gene>
<evidence type="ECO:0000250" key="1">
    <source>
        <dbReference type="UniProtKB" id="P53026"/>
    </source>
</evidence>
<evidence type="ECO:0000250" key="2">
    <source>
        <dbReference type="UniProtKB" id="P62906"/>
    </source>
</evidence>
<evidence type="ECO:0000305" key="3"/>
<accession>P62907</accession>
<accession>P52859</accession>
<accession>P53025</accession>
<comment type="function">
    <text evidence="2">Component of the large ribosomal subunit. The ribosome is a large ribonucleoprotein complex responsible for the synthesis of proteins in the cell.</text>
</comment>
<comment type="subunit">
    <text evidence="2">Component of the large ribosomal subunit.</text>
</comment>
<comment type="subcellular location">
    <subcellularLocation>
        <location evidence="2">Cytoplasm</location>
    </subcellularLocation>
</comment>
<comment type="similarity">
    <text evidence="3">Belongs to the universal ribosomal protein uL1 family.</text>
</comment>
<organism>
    <name type="scientific">Rattus norvegicus</name>
    <name type="common">Rat</name>
    <dbReference type="NCBI Taxonomy" id="10116"/>
    <lineage>
        <taxon>Eukaryota</taxon>
        <taxon>Metazoa</taxon>
        <taxon>Chordata</taxon>
        <taxon>Craniata</taxon>
        <taxon>Vertebrata</taxon>
        <taxon>Euteleostomi</taxon>
        <taxon>Mammalia</taxon>
        <taxon>Eutheria</taxon>
        <taxon>Euarchontoglires</taxon>
        <taxon>Glires</taxon>
        <taxon>Rodentia</taxon>
        <taxon>Myomorpha</taxon>
        <taxon>Muroidea</taxon>
        <taxon>Muridae</taxon>
        <taxon>Murinae</taxon>
        <taxon>Rattus</taxon>
    </lineage>
</organism>
<feature type="initiator methionine" description="Removed" evidence="2">
    <location>
        <position position="1"/>
    </location>
</feature>
<feature type="chain" id="PRO_0000125822" description="Large ribosomal subunit protein uL1">
    <location>
        <begin position="2"/>
        <end position="217"/>
    </location>
</feature>
<feature type="modified residue" description="N-acetylserine" evidence="2">
    <location>
        <position position="2"/>
    </location>
</feature>
<feature type="modified residue" description="Phosphotyrosine" evidence="1">
    <location>
        <position position="11"/>
    </location>
</feature>
<feature type="modified residue" description="N6-acetyllysine" evidence="1">
    <location>
        <position position="91"/>
    </location>
</feature>
<feature type="modified residue" description="N6-acetyllysine" evidence="2">
    <location>
        <position position="106"/>
    </location>
</feature>
<feature type="modified residue" description="N6-acetyllysine; alternate" evidence="2">
    <location>
        <position position="118"/>
    </location>
</feature>
<feature type="cross-link" description="Glycyl lysine isopeptide (Lys-Gly) (interchain with G-Cter in SUMO1); alternate" evidence="2">
    <location>
        <position position="118"/>
    </location>
</feature>
<feature type="cross-link" description="Glycyl lysine isopeptide (Lys-Gly) (interchain with G-Cter in SUMO2); alternate" evidence="2">
    <location>
        <position position="118"/>
    </location>
</feature>
<feature type="cross-link" description="Glycyl lysine isopeptide (Lys-Gly) (interchain with G-Cter in SUMO2)" evidence="2">
    <location>
        <position position="161"/>
    </location>
</feature>
<dbReference type="EMBL" id="X93352">
    <property type="protein sequence ID" value="CAA63732.1"/>
    <property type="molecule type" value="mRNA"/>
</dbReference>
<dbReference type="EMBL" id="BC058468">
    <property type="protein sequence ID" value="AAH58468.1"/>
    <property type="molecule type" value="mRNA"/>
</dbReference>
<dbReference type="PIR" id="JC4677">
    <property type="entry name" value="JC4677"/>
</dbReference>
<dbReference type="RefSeq" id="NP_112327.1">
    <property type="nucleotide sequence ID" value="NM_031065.1"/>
</dbReference>
<dbReference type="PDB" id="7QGG">
    <property type="method" value="EM"/>
    <property type="resolution" value="2.86 A"/>
    <property type="chains" value="Cz=1-217"/>
</dbReference>
<dbReference type="PDBsum" id="7QGG"/>
<dbReference type="EMDB" id="EMD-13954"/>
<dbReference type="SMR" id="P62907"/>
<dbReference type="BioGRID" id="249602">
    <property type="interactions" value="4"/>
</dbReference>
<dbReference type="FunCoup" id="P62907">
    <property type="interactions" value="2777"/>
</dbReference>
<dbReference type="IntAct" id="P62907">
    <property type="interactions" value="3"/>
</dbReference>
<dbReference type="STRING" id="10116.ENSRNOP00000000603"/>
<dbReference type="iPTMnet" id="P62907"/>
<dbReference type="PhosphoSitePlus" id="P62907"/>
<dbReference type="jPOST" id="P62907"/>
<dbReference type="PaxDb" id="10116-ENSRNOP00000000603"/>
<dbReference type="Ensembl" id="ENSRNOT00000000603.8">
    <property type="protein sequence ID" value="ENSRNOP00000000603.4"/>
    <property type="gene ID" value="ENSRNOG00000000505.8"/>
</dbReference>
<dbReference type="GeneID" id="81729"/>
<dbReference type="KEGG" id="rno:81729"/>
<dbReference type="UCSC" id="RGD:620497">
    <property type="organism name" value="rat"/>
</dbReference>
<dbReference type="AGR" id="RGD:620497"/>
<dbReference type="CTD" id="4736"/>
<dbReference type="RGD" id="620497">
    <property type="gene designation" value="Rpl10a"/>
</dbReference>
<dbReference type="eggNOG" id="KOG1570">
    <property type="taxonomic scope" value="Eukaryota"/>
</dbReference>
<dbReference type="GeneTree" id="ENSGT00390000008767"/>
<dbReference type="HOGENOM" id="CLU_062853_3_0_1"/>
<dbReference type="InParanoid" id="P62907"/>
<dbReference type="OMA" id="GPRNKMP"/>
<dbReference type="OrthoDB" id="2449818at2759"/>
<dbReference type="PhylomeDB" id="P62907"/>
<dbReference type="TreeFam" id="TF300791"/>
<dbReference type="Reactome" id="R-RNO-156827">
    <property type="pathway name" value="L13a-mediated translational silencing of Ceruloplasmin expression"/>
</dbReference>
<dbReference type="Reactome" id="R-RNO-1799339">
    <property type="pathway name" value="SRP-dependent cotranslational protein targeting to membrane"/>
</dbReference>
<dbReference type="Reactome" id="R-RNO-6791226">
    <property type="pathway name" value="Major pathway of rRNA processing in the nucleolus and cytosol"/>
</dbReference>
<dbReference type="Reactome" id="R-RNO-72689">
    <property type="pathway name" value="Formation of a pool of free 40S subunits"/>
</dbReference>
<dbReference type="Reactome" id="R-RNO-72706">
    <property type="pathway name" value="GTP hydrolysis and joining of the 60S ribosomal subunit"/>
</dbReference>
<dbReference type="Reactome" id="R-RNO-975956">
    <property type="pathway name" value="Nonsense Mediated Decay (NMD) independent of the Exon Junction Complex (EJC)"/>
</dbReference>
<dbReference type="Reactome" id="R-RNO-975957">
    <property type="pathway name" value="Nonsense Mediated Decay (NMD) enhanced by the Exon Junction Complex (EJC)"/>
</dbReference>
<dbReference type="CD-CODE" id="34881ED2">
    <property type="entry name" value="Nucleolus"/>
</dbReference>
<dbReference type="PRO" id="PR:P62907"/>
<dbReference type="Proteomes" id="UP000002494">
    <property type="component" value="Chromosome 20"/>
</dbReference>
<dbReference type="Bgee" id="ENSRNOG00000000505">
    <property type="expression patterns" value="Expressed in thymus and 19 other cell types or tissues"/>
</dbReference>
<dbReference type="GO" id="GO:0005737">
    <property type="term" value="C:cytoplasm"/>
    <property type="evidence" value="ECO:0000266"/>
    <property type="project" value="RGD"/>
</dbReference>
<dbReference type="GO" id="GO:0022625">
    <property type="term" value="C:cytosolic large ribosomal subunit"/>
    <property type="evidence" value="ECO:0000314"/>
    <property type="project" value="RGD"/>
</dbReference>
<dbReference type="GO" id="GO:0022626">
    <property type="term" value="C:cytosolic ribosome"/>
    <property type="evidence" value="ECO:0000266"/>
    <property type="project" value="RGD"/>
</dbReference>
<dbReference type="GO" id="GO:0014069">
    <property type="term" value="C:postsynaptic density"/>
    <property type="evidence" value="ECO:0000314"/>
    <property type="project" value="SynGO"/>
</dbReference>
<dbReference type="GO" id="GO:0045202">
    <property type="term" value="C:synapse"/>
    <property type="evidence" value="ECO:0000266"/>
    <property type="project" value="RGD"/>
</dbReference>
<dbReference type="GO" id="GO:0003723">
    <property type="term" value="F:RNA binding"/>
    <property type="evidence" value="ECO:0000318"/>
    <property type="project" value="GO_Central"/>
</dbReference>
<dbReference type="GO" id="GO:0003735">
    <property type="term" value="F:structural constituent of ribosome"/>
    <property type="evidence" value="ECO:0000266"/>
    <property type="project" value="RGD"/>
</dbReference>
<dbReference type="GO" id="GO:0002181">
    <property type="term" value="P:cytoplasmic translation"/>
    <property type="evidence" value="ECO:0000266"/>
    <property type="project" value="RGD"/>
</dbReference>
<dbReference type="GO" id="GO:0045471">
    <property type="term" value="P:response to ethanol"/>
    <property type="evidence" value="ECO:0000270"/>
    <property type="project" value="RGD"/>
</dbReference>
<dbReference type="GO" id="GO:0006412">
    <property type="term" value="P:translation"/>
    <property type="evidence" value="ECO:0000314"/>
    <property type="project" value="RGD"/>
</dbReference>
<dbReference type="CDD" id="cd00403">
    <property type="entry name" value="Ribosomal_L1"/>
    <property type="match status" value="1"/>
</dbReference>
<dbReference type="FunFam" id="3.30.190.20:FF:000006">
    <property type="entry name" value="Ribosomal protein"/>
    <property type="match status" value="1"/>
</dbReference>
<dbReference type="FunFam" id="3.40.50.790:FF:000002">
    <property type="entry name" value="Ribosomal protein"/>
    <property type="match status" value="1"/>
</dbReference>
<dbReference type="FunFam" id="3.30.190.20:FF:000009">
    <property type="entry name" value="Ribosomal protein L10a"/>
    <property type="match status" value="1"/>
</dbReference>
<dbReference type="Gene3D" id="3.30.190.20">
    <property type="match status" value="1"/>
</dbReference>
<dbReference type="Gene3D" id="3.40.50.790">
    <property type="match status" value="1"/>
</dbReference>
<dbReference type="InterPro" id="IPR050257">
    <property type="entry name" value="eL8/uL1-like"/>
</dbReference>
<dbReference type="InterPro" id="IPR002143">
    <property type="entry name" value="Ribosomal_uL1"/>
</dbReference>
<dbReference type="InterPro" id="IPR023674">
    <property type="entry name" value="Ribosomal_uL1-like"/>
</dbReference>
<dbReference type="InterPro" id="IPR028364">
    <property type="entry name" value="Ribosomal_uL1/biogenesis"/>
</dbReference>
<dbReference type="InterPro" id="IPR016095">
    <property type="entry name" value="Ribosomal_uL1_3-a/b-sand"/>
</dbReference>
<dbReference type="InterPro" id="IPR023673">
    <property type="entry name" value="Ribosomal_uL1_CS"/>
</dbReference>
<dbReference type="PANTHER" id="PTHR23105">
    <property type="entry name" value="RIBOSOMAL PROTEIN L7AE FAMILY MEMBER"/>
    <property type="match status" value="1"/>
</dbReference>
<dbReference type="Pfam" id="PF00687">
    <property type="entry name" value="Ribosomal_L1"/>
    <property type="match status" value="1"/>
</dbReference>
<dbReference type="PIRSF" id="PIRSF002155">
    <property type="entry name" value="Ribosomal_L1"/>
    <property type="match status" value="1"/>
</dbReference>
<dbReference type="SUPFAM" id="SSF56808">
    <property type="entry name" value="Ribosomal protein L1"/>
    <property type="match status" value="1"/>
</dbReference>
<dbReference type="PROSITE" id="PS01199">
    <property type="entry name" value="RIBOSOMAL_L1"/>
    <property type="match status" value="1"/>
</dbReference>
<proteinExistence type="evidence at protein level"/>
<keyword id="KW-0002">3D-structure</keyword>
<keyword id="KW-0007">Acetylation</keyword>
<keyword id="KW-0963">Cytoplasm</keyword>
<keyword id="KW-0903">Direct protein sequencing</keyword>
<keyword id="KW-1017">Isopeptide bond</keyword>
<keyword id="KW-0597">Phosphoprotein</keyword>
<keyword id="KW-1185">Reference proteome</keyword>
<keyword id="KW-0687">Ribonucleoprotein</keyword>
<keyword id="KW-0689">Ribosomal protein</keyword>
<keyword id="KW-0832">Ubl conjugation</keyword>
<reference key="1">
    <citation type="journal article" date="1996" name="Biochem. Biophys. Res. Commun.">
        <title>The primary structure of rat ribosomal protein L10a.</title>
        <authorList>
            <person name="Olvera J."/>
            <person name="Wool I.G."/>
        </authorList>
    </citation>
    <scope>NUCLEOTIDE SEQUENCE [MRNA]</scope>
    <scope>PROTEIN SEQUENCE OF 199-213</scope>
    <source>
        <strain>Sprague-Dawley</strain>
        <tissue>Liver</tissue>
    </source>
</reference>
<reference key="2">
    <citation type="journal article" date="2004" name="Genome Res.">
        <title>The status, quality, and expansion of the NIH full-length cDNA project: the Mammalian Gene Collection (MGC).</title>
        <authorList>
            <consortium name="The MGC Project Team"/>
        </authorList>
    </citation>
    <scope>NUCLEOTIDE SEQUENCE [LARGE SCALE MRNA]</scope>
    <source>
        <tissue>Pituitary</tissue>
    </source>
</reference>